<dbReference type="EMBL" id="AE014075">
    <property type="protein sequence ID" value="AAN81289.1"/>
    <property type="status" value="ALT_INIT"/>
    <property type="molecule type" value="Genomic_DNA"/>
</dbReference>
<dbReference type="RefSeq" id="WP_000426124.1">
    <property type="nucleotide sequence ID" value="NZ_CP051263.1"/>
</dbReference>
<dbReference type="SMR" id="P0A8W9"/>
<dbReference type="STRING" id="199310.c2835"/>
<dbReference type="KEGG" id="ecc:c2835"/>
<dbReference type="eggNOG" id="COG3013">
    <property type="taxonomic scope" value="Bacteria"/>
</dbReference>
<dbReference type="HOGENOM" id="CLU_101021_1_0_6"/>
<dbReference type="Proteomes" id="UP000001410">
    <property type="component" value="Chromosome"/>
</dbReference>
<dbReference type="FunFam" id="1.10.3190.10:FF:000001">
    <property type="entry name" value="UPF0304 protein YfbU"/>
    <property type="match status" value="1"/>
</dbReference>
<dbReference type="Gene3D" id="1.10.287.680">
    <property type="entry name" value="Helix hairpin bin"/>
    <property type="match status" value="1"/>
</dbReference>
<dbReference type="Gene3D" id="1.10.3190.10">
    <property type="entry name" value="yfbu gene product, domain 2"/>
    <property type="match status" value="1"/>
</dbReference>
<dbReference type="HAMAP" id="MF_00762">
    <property type="entry name" value="UPF0304"/>
    <property type="match status" value="1"/>
</dbReference>
<dbReference type="InterPro" id="IPR005587">
    <property type="entry name" value="UPF0304_YfbU"/>
</dbReference>
<dbReference type="InterPro" id="IPR023146">
    <property type="entry name" value="YfbU_alpha-helical_sf"/>
</dbReference>
<dbReference type="InterPro" id="IPR023145">
    <property type="entry name" value="YfbU_helix-hairpin_sf"/>
</dbReference>
<dbReference type="NCBIfam" id="NF003936">
    <property type="entry name" value="PRK05445.1"/>
    <property type="match status" value="1"/>
</dbReference>
<dbReference type="Pfam" id="PF03887">
    <property type="entry name" value="YfbU"/>
    <property type="match status" value="1"/>
</dbReference>
<dbReference type="PIRSF" id="PIRSF006272">
    <property type="entry name" value="UCP006272"/>
    <property type="match status" value="1"/>
</dbReference>
<dbReference type="SUPFAM" id="SSF116960">
    <property type="entry name" value="YfbU-like"/>
    <property type="match status" value="1"/>
</dbReference>
<reference key="1">
    <citation type="journal article" date="2002" name="Proc. Natl. Acad. Sci. U.S.A.">
        <title>Extensive mosaic structure revealed by the complete genome sequence of uropathogenic Escherichia coli.</title>
        <authorList>
            <person name="Welch R.A."/>
            <person name="Burland V."/>
            <person name="Plunkett G. III"/>
            <person name="Redford P."/>
            <person name="Roesch P."/>
            <person name="Rasko D."/>
            <person name="Buckles E.L."/>
            <person name="Liou S.-R."/>
            <person name="Boutin A."/>
            <person name="Hackett J."/>
            <person name="Stroud D."/>
            <person name="Mayhew G.F."/>
            <person name="Rose D.J."/>
            <person name="Zhou S."/>
            <person name="Schwartz D.C."/>
            <person name="Perna N.T."/>
            <person name="Mobley H.L.T."/>
            <person name="Donnenberg M.S."/>
            <person name="Blattner F.R."/>
        </authorList>
    </citation>
    <scope>NUCLEOTIDE SEQUENCE [LARGE SCALE GENOMIC DNA]</scope>
    <source>
        <strain>CFT073 / ATCC 700928 / UPEC</strain>
    </source>
</reference>
<gene>
    <name type="primary">yfbU</name>
    <name type="ordered locus">c2835</name>
</gene>
<sequence length="164" mass="19536">MEMTNAQRLILSNQYKMMTMLDPANAERYRRLQTIIERGYGLQMRELDREFGELKEETCRTIIDIMEMYHALHVSWSNLQDQQSIDERRVTFLGFDAATEARYLGYVRFMVNVEGRYTHFDAGTHGFNAQTPMWEKYQRMLNVWHACPRQYHLSANEINQIINA</sequence>
<protein>
    <recommendedName>
        <fullName>UPF0304 protein YfbU</fullName>
    </recommendedName>
</protein>
<organism>
    <name type="scientific">Escherichia coli O6:H1 (strain CFT073 / ATCC 700928 / UPEC)</name>
    <dbReference type="NCBI Taxonomy" id="199310"/>
    <lineage>
        <taxon>Bacteria</taxon>
        <taxon>Pseudomonadati</taxon>
        <taxon>Pseudomonadota</taxon>
        <taxon>Gammaproteobacteria</taxon>
        <taxon>Enterobacterales</taxon>
        <taxon>Enterobacteriaceae</taxon>
        <taxon>Escherichia</taxon>
    </lineage>
</organism>
<comment type="similarity">
    <text evidence="1">Belongs to the UPF0304 family.</text>
</comment>
<comment type="sequence caution" evidence="1">
    <conflict type="erroneous initiation">
        <sequence resource="EMBL-CDS" id="AAN81289"/>
    </conflict>
</comment>
<feature type="chain" id="PRO_0000218163" description="UPF0304 protein YfbU">
    <location>
        <begin position="1"/>
        <end position="164"/>
    </location>
</feature>
<accession>P0A8W9</accession>
<accession>P76492</accession>
<name>YFBU_ECOL6</name>
<keyword id="KW-1185">Reference proteome</keyword>
<proteinExistence type="inferred from homology"/>
<evidence type="ECO:0000305" key="1"/>